<organism>
    <name type="scientific">Bdellovibrio bacteriovorus (strain ATCC 15356 / DSM 50701 / NCIMB 9529 / HD100)</name>
    <dbReference type="NCBI Taxonomy" id="264462"/>
    <lineage>
        <taxon>Bacteria</taxon>
        <taxon>Pseudomonadati</taxon>
        <taxon>Bdellovibrionota</taxon>
        <taxon>Bdellovibrionia</taxon>
        <taxon>Bdellovibrionales</taxon>
        <taxon>Pseudobdellovibrionaceae</taxon>
        <taxon>Bdellovibrio</taxon>
    </lineage>
</organism>
<accession>Q6MLS4</accession>
<reference key="1">
    <citation type="journal article" date="2004" name="Science">
        <title>A predator unmasked: life cycle of Bdellovibrio bacteriovorus from a genomic perspective.</title>
        <authorList>
            <person name="Rendulic S."/>
            <person name="Jagtap P."/>
            <person name="Rosinus A."/>
            <person name="Eppinger M."/>
            <person name="Baar C."/>
            <person name="Lanz C."/>
            <person name="Keller H."/>
            <person name="Lambert C."/>
            <person name="Evans K.J."/>
            <person name="Goesmann A."/>
            <person name="Meyer F."/>
            <person name="Sockett R.E."/>
            <person name="Schuster S.C."/>
        </authorList>
    </citation>
    <scope>NUCLEOTIDE SEQUENCE [LARGE SCALE GENOMIC DNA]</scope>
    <source>
        <strain>ATCC 15356 / DSM 50701 / NCIMB 9529 / HD100</strain>
    </source>
</reference>
<dbReference type="EC" id="5.4.2.10" evidence="1"/>
<dbReference type="EMBL" id="BX842651">
    <property type="protein sequence ID" value="CAE79782.1"/>
    <property type="molecule type" value="Genomic_DNA"/>
</dbReference>
<dbReference type="RefSeq" id="WP_011164384.1">
    <property type="nucleotide sequence ID" value="NC_005363.1"/>
</dbReference>
<dbReference type="SMR" id="Q6MLS4"/>
<dbReference type="STRING" id="264462.Bd1931"/>
<dbReference type="GeneID" id="93012886"/>
<dbReference type="KEGG" id="bba:Bd1931"/>
<dbReference type="eggNOG" id="COG1109">
    <property type="taxonomic scope" value="Bacteria"/>
</dbReference>
<dbReference type="HOGENOM" id="CLU_016950_7_0_7"/>
<dbReference type="Proteomes" id="UP000008080">
    <property type="component" value="Chromosome"/>
</dbReference>
<dbReference type="GO" id="GO:0005829">
    <property type="term" value="C:cytosol"/>
    <property type="evidence" value="ECO:0007669"/>
    <property type="project" value="TreeGrafter"/>
</dbReference>
<dbReference type="GO" id="GO:0000287">
    <property type="term" value="F:magnesium ion binding"/>
    <property type="evidence" value="ECO:0007669"/>
    <property type="project" value="UniProtKB-UniRule"/>
</dbReference>
<dbReference type="GO" id="GO:0008966">
    <property type="term" value="F:phosphoglucosamine mutase activity"/>
    <property type="evidence" value="ECO:0007669"/>
    <property type="project" value="UniProtKB-UniRule"/>
</dbReference>
<dbReference type="GO" id="GO:0004615">
    <property type="term" value="F:phosphomannomutase activity"/>
    <property type="evidence" value="ECO:0007669"/>
    <property type="project" value="TreeGrafter"/>
</dbReference>
<dbReference type="GO" id="GO:0005975">
    <property type="term" value="P:carbohydrate metabolic process"/>
    <property type="evidence" value="ECO:0007669"/>
    <property type="project" value="InterPro"/>
</dbReference>
<dbReference type="GO" id="GO:0009252">
    <property type="term" value="P:peptidoglycan biosynthetic process"/>
    <property type="evidence" value="ECO:0007669"/>
    <property type="project" value="TreeGrafter"/>
</dbReference>
<dbReference type="GO" id="GO:0006048">
    <property type="term" value="P:UDP-N-acetylglucosamine biosynthetic process"/>
    <property type="evidence" value="ECO:0007669"/>
    <property type="project" value="TreeGrafter"/>
</dbReference>
<dbReference type="CDD" id="cd05802">
    <property type="entry name" value="GlmM"/>
    <property type="match status" value="1"/>
</dbReference>
<dbReference type="FunFam" id="3.30.310.50:FF:000001">
    <property type="entry name" value="Phosphoglucosamine mutase"/>
    <property type="match status" value="1"/>
</dbReference>
<dbReference type="FunFam" id="3.40.120.10:FF:000001">
    <property type="entry name" value="Phosphoglucosamine mutase"/>
    <property type="match status" value="1"/>
</dbReference>
<dbReference type="FunFam" id="3.40.120.10:FF:000002">
    <property type="entry name" value="Phosphoglucosamine mutase"/>
    <property type="match status" value="1"/>
</dbReference>
<dbReference type="Gene3D" id="3.40.120.10">
    <property type="entry name" value="Alpha-D-Glucose-1,6-Bisphosphate, subunit A, domain 3"/>
    <property type="match status" value="3"/>
</dbReference>
<dbReference type="Gene3D" id="3.30.310.50">
    <property type="entry name" value="Alpha-D-phosphohexomutase, C-terminal domain"/>
    <property type="match status" value="1"/>
</dbReference>
<dbReference type="HAMAP" id="MF_01554_B">
    <property type="entry name" value="GlmM_B"/>
    <property type="match status" value="1"/>
</dbReference>
<dbReference type="InterPro" id="IPR005844">
    <property type="entry name" value="A-D-PHexomutase_a/b/a-I"/>
</dbReference>
<dbReference type="InterPro" id="IPR016055">
    <property type="entry name" value="A-D-PHexomutase_a/b/a-I/II/III"/>
</dbReference>
<dbReference type="InterPro" id="IPR005845">
    <property type="entry name" value="A-D-PHexomutase_a/b/a-II"/>
</dbReference>
<dbReference type="InterPro" id="IPR005846">
    <property type="entry name" value="A-D-PHexomutase_a/b/a-III"/>
</dbReference>
<dbReference type="InterPro" id="IPR005843">
    <property type="entry name" value="A-D-PHexomutase_C"/>
</dbReference>
<dbReference type="InterPro" id="IPR036900">
    <property type="entry name" value="A-D-PHexomutase_C_sf"/>
</dbReference>
<dbReference type="InterPro" id="IPR016066">
    <property type="entry name" value="A-D-PHexomutase_CS"/>
</dbReference>
<dbReference type="InterPro" id="IPR005841">
    <property type="entry name" value="Alpha-D-phosphohexomutase_SF"/>
</dbReference>
<dbReference type="InterPro" id="IPR006352">
    <property type="entry name" value="GlmM_bact"/>
</dbReference>
<dbReference type="InterPro" id="IPR050060">
    <property type="entry name" value="Phosphoglucosamine_mutase"/>
</dbReference>
<dbReference type="NCBIfam" id="TIGR01455">
    <property type="entry name" value="glmM"/>
    <property type="match status" value="1"/>
</dbReference>
<dbReference type="NCBIfam" id="NF008139">
    <property type="entry name" value="PRK10887.1"/>
    <property type="match status" value="1"/>
</dbReference>
<dbReference type="PANTHER" id="PTHR42946:SF1">
    <property type="entry name" value="PHOSPHOGLUCOMUTASE (ALPHA-D-GLUCOSE-1,6-BISPHOSPHATE-DEPENDENT)"/>
    <property type="match status" value="1"/>
</dbReference>
<dbReference type="PANTHER" id="PTHR42946">
    <property type="entry name" value="PHOSPHOHEXOSE MUTASE"/>
    <property type="match status" value="1"/>
</dbReference>
<dbReference type="Pfam" id="PF02878">
    <property type="entry name" value="PGM_PMM_I"/>
    <property type="match status" value="1"/>
</dbReference>
<dbReference type="Pfam" id="PF02879">
    <property type="entry name" value="PGM_PMM_II"/>
    <property type="match status" value="1"/>
</dbReference>
<dbReference type="Pfam" id="PF02880">
    <property type="entry name" value="PGM_PMM_III"/>
    <property type="match status" value="1"/>
</dbReference>
<dbReference type="Pfam" id="PF00408">
    <property type="entry name" value="PGM_PMM_IV"/>
    <property type="match status" value="1"/>
</dbReference>
<dbReference type="PRINTS" id="PR00509">
    <property type="entry name" value="PGMPMM"/>
</dbReference>
<dbReference type="SUPFAM" id="SSF55957">
    <property type="entry name" value="Phosphoglucomutase, C-terminal domain"/>
    <property type="match status" value="1"/>
</dbReference>
<dbReference type="SUPFAM" id="SSF53738">
    <property type="entry name" value="Phosphoglucomutase, first 3 domains"/>
    <property type="match status" value="3"/>
</dbReference>
<dbReference type="PROSITE" id="PS00710">
    <property type="entry name" value="PGM_PMM"/>
    <property type="match status" value="1"/>
</dbReference>
<sequence length="457" mass="50211">MEKKTRLFGTDGIRGTANQYPMTPDMVVKIGQAIGYLLRKEAEEKSSSVRKVVIGKDTRLSGYMIEQALASGLNSMGVFVQLVGPLPTPGIGYLTRTMRAAAGIVISASHNPFHDNGIKVFGSDGFKISEEMEREIERLVLEEDLTPLLPPSKEIGRTRRIEDSQGRYIVYVKGTFPLEYTLDGMRIVLDTANGASYKVAPSIFQELGAEVIQLGDDPNGTNINDKVGALYPQKLAESVLHYRADVGISLDGDADRVIMVDEKGEIVNGDRILAICALHMKERGLLKGDTLVATQMSNFGLEKRMNEAGIKLVKTGVGDKYVVEEMRKHGYNLGGEQSGHIIFLDHTTTGDGCIAALSVLAVMKQTGKKMSDLNHVFEDVPQILINCRVKRRAELSELAGYNDMIRNIEKKLAGNGRVFVRFSGTEPVIRVLVEGTEKAQITQFAEEIASFLEKELS</sequence>
<feature type="chain" id="PRO_0000147850" description="Phosphoglucosamine mutase">
    <location>
        <begin position="1"/>
        <end position="457"/>
    </location>
</feature>
<feature type="active site" description="Phosphoserine intermediate" evidence="1">
    <location>
        <position position="109"/>
    </location>
</feature>
<feature type="binding site" description="via phosphate group" evidence="1">
    <location>
        <position position="109"/>
    </location>
    <ligand>
        <name>Mg(2+)</name>
        <dbReference type="ChEBI" id="CHEBI:18420"/>
    </ligand>
</feature>
<feature type="binding site" evidence="1">
    <location>
        <position position="251"/>
    </location>
    <ligand>
        <name>Mg(2+)</name>
        <dbReference type="ChEBI" id="CHEBI:18420"/>
    </ligand>
</feature>
<feature type="binding site" evidence="1">
    <location>
        <position position="253"/>
    </location>
    <ligand>
        <name>Mg(2+)</name>
        <dbReference type="ChEBI" id="CHEBI:18420"/>
    </ligand>
</feature>
<feature type="binding site" evidence="1">
    <location>
        <position position="255"/>
    </location>
    <ligand>
        <name>Mg(2+)</name>
        <dbReference type="ChEBI" id="CHEBI:18420"/>
    </ligand>
</feature>
<feature type="modified residue" description="Phosphoserine" evidence="1">
    <location>
        <position position="109"/>
    </location>
</feature>
<evidence type="ECO:0000255" key="1">
    <source>
        <dbReference type="HAMAP-Rule" id="MF_01554"/>
    </source>
</evidence>
<keyword id="KW-0413">Isomerase</keyword>
<keyword id="KW-0460">Magnesium</keyword>
<keyword id="KW-0479">Metal-binding</keyword>
<keyword id="KW-0597">Phosphoprotein</keyword>
<keyword id="KW-1185">Reference proteome</keyword>
<gene>
    <name evidence="1" type="primary">glmM</name>
    <name type="ordered locus">Bd1931</name>
</gene>
<proteinExistence type="inferred from homology"/>
<name>GLMM_BDEBA</name>
<comment type="function">
    <text evidence="1">Catalyzes the conversion of glucosamine-6-phosphate to glucosamine-1-phosphate.</text>
</comment>
<comment type="catalytic activity">
    <reaction evidence="1">
        <text>alpha-D-glucosamine 1-phosphate = D-glucosamine 6-phosphate</text>
        <dbReference type="Rhea" id="RHEA:23424"/>
        <dbReference type="ChEBI" id="CHEBI:58516"/>
        <dbReference type="ChEBI" id="CHEBI:58725"/>
        <dbReference type="EC" id="5.4.2.10"/>
    </reaction>
</comment>
<comment type="cofactor">
    <cofactor evidence="1">
        <name>Mg(2+)</name>
        <dbReference type="ChEBI" id="CHEBI:18420"/>
    </cofactor>
    <text evidence="1">Binds 1 Mg(2+) ion per subunit.</text>
</comment>
<comment type="PTM">
    <text evidence="1">Activated by phosphorylation.</text>
</comment>
<comment type="similarity">
    <text evidence="1">Belongs to the phosphohexose mutase family.</text>
</comment>
<protein>
    <recommendedName>
        <fullName evidence="1">Phosphoglucosamine mutase</fullName>
        <ecNumber evidence="1">5.4.2.10</ecNumber>
    </recommendedName>
</protein>